<organism>
    <name type="scientific">Buchnera aphidicola subsp. Acyrthosiphon pisum (strain APS)</name>
    <name type="common">Acyrthosiphon pisum symbiotic bacterium</name>
    <dbReference type="NCBI Taxonomy" id="107806"/>
    <lineage>
        <taxon>Bacteria</taxon>
        <taxon>Pseudomonadati</taxon>
        <taxon>Pseudomonadota</taxon>
        <taxon>Gammaproteobacteria</taxon>
        <taxon>Enterobacterales</taxon>
        <taxon>Erwiniaceae</taxon>
        <taxon>Buchnera</taxon>
    </lineage>
</organism>
<sequence length="292" mass="32762">MTRIVLFLLTNLAVMLIFSLILFLTGIQSNTIYGLLIMSGLFGFSGSILSLILSKWIALRSVNGEIITHPRNEVESWLINTVRQQSIQKGIIMPQIAVYHATDINAFATGARRNSALIAVSTGLLENMTHHEAEAVIAHEISHIANGDMITMTLVQGVVNTFVIFISRFLSQIISNVMSSNRNENNTEEKNSFVYFLVSTFLELIFGILASIITMWFSRHREFYADASSAKMVGREKMIAALNRLKTSHEPQESDSMIAFCINGKSKSFLKLFASHPSLENRIEALYNQEYM</sequence>
<name>HTPX_BUCAI</name>
<evidence type="ECO:0000255" key="1">
    <source>
        <dbReference type="HAMAP-Rule" id="MF_00188"/>
    </source>
</evidence>
<dbReference type="EC" id="3.4.24.-" evidence="1"/>
<dbReference type="EMBL" id="BA000003">
    <property type="protein sequence ID" value="BAB13029.1"/>
    <property type="molecule type" value="Genomic_DNA"/>
</dbReference>
<dbReference type="RefSeq" id="NP_240143.1">
    <property type="nucleotide sequence ID" value="NC_002528.1"/>
</dbReference>
<dbReference type="RefSeq" id="WP_009874275.1">
    <property type="nucleotide sequence ID" value="NZ_AP036055.1"/>
</dbReference>
<dbReference type="SMR" id="P57406"/>
<dbReference type="STRING" id="563178.BUAP5A_314"/>
<dbReference type="MEROPS" id="M48.002"/>
<dbReference type="EnsemblBacteria" id="BAB13029">
    <property type="protein sequence ID" value="BAB13029"/>
    <property type="gene ID" value="BAB13029"/>
</dbReference>
<dbReference type="KEGG" id="buc:BU321"/>
<dbReference type="PATRIC" id="fig|107806.10.peg.333"/>
<dbReference type="eggNOG" id="COG0501">
    <property type="taxonomic scope" value="Bacteria"/>
</dbReference>
<dbReference type="HOGENOM" id="CLU_042266_1_0_6"/>
<dbReference type="Proteomes" id="UP000001806">
    <property type="component" value="Chromosome"/>
</dbReference>
<dbReference type="GO" id="GO:0005886">
    <property type="term" value="C:plasma membrane"/>
    <property type="evidence" value="ECO:0007669"/>
    <property type="project" value="UniProtKB-SubCell"/>
</dbReference>
<dbReference type="GO" id="GO:0004222">
    <property type="term" value="F:metalloendopeptidase activity"/>
    <property type="evidence" value="ECO:0007669"/>
    <property type="project" value="UniProtKB-UniRule"/>
</dbReference>
<dbReference type="GO" id="GO:0008270">
    <property type="term" value="F:zinc ion binding"/>
    <property type="evidence" value="ECO:0007669"/>
    <property type="project" value="UniProtKB-UniRule"/>
</dbReference>
<dbReference type="GO" id="GO:0006508">
    <property type="term" value="P:proteolysis"/>
    <property type="evidence" value="ECO:0007669"/>
    <property type="project" value="UniProtKB-KW"/>
</dbReference>
<dbReference type="CDD" id="cd07335">
    <property type="entry name" value="M48B_HtpX_like"/>
    <property type="match status" value="1"/>
</dbReference>
<dbReference type="FunFam" id="3.30.2010.10:FF:000001">
    <property type="entry name" value="Protease HtpX"/>
    <property type="match status" value="1"/>
</dbReference>
<dbReference type="Gene3D" id="3.30.2010.10">
    <property type="entry name" value="Metalloproteases ('zincins'), catalytic domain"/>
    <property type="match status" value="1"/>
</dbReference>
<dbReference type="HAMAP" id="MF_00188">
    <property type="entry name" value="Pept_M48_protease_HtpX"/>
    <property type="match status" value="1"/>
</dbReference>
<dbReference type="InterPro" id="IPR050083">
    <property type="entry name" value="HtpX_protease"/>
</dbReference>
<dbReference type="InterPro" id="IPR022919">
    <property type="entry name" value="Pept_M48_protease_HtpX"/>
</dbReference>
<dbReference type="InterPro" id="IPR001915">
    <property type="entry name" value="Peptidase_M48"/>
</dbReference>
<dbReference type="NCBIfam" id="NF003965">
    <property type="entry name" value="PRK05457.1"/>
    <property type="match status" value="1"/>
</dbReference>
<dbReference type="PANTHER" id="PTHR43221">
    <property type="entry name" value="PROTEASE HTPX"/>
    <property type="match status" value="1"/>
</dbReference>
<dbReference type="PANTHER" id="PTHR43221:SF1">
    <property type="entry name" value="PROTEASE HTPX"/>
    <property type="match status" value="1"/>
</dbReference>
<dbReference type="Pfam" id="PF01435">
    <property type="entry name" value="Peptidase_M48"/>
    <property type="match status" value="1"/>
</dbReference>
<feature type="chain" id="PRO_0000138856" description="Protease HtpX">
    <location>
        <begin position="1"/>
        <end position="292"/>
    </location>
</feature>
<feature type="transmembrane region" description="Helical" evidence="1">
    <location>
        <begin position="4"/>
        <end position="24"/>
    </location>
</feature>
<feature type="transmembrane region" description="Helical" evidence="1">
    <location>
        <begin position="32"/>
        <end position="52"/>
    </location>
</feature>
<feature type="transmembrane region" description="Helical" evidence="1">
    <location>
        <begin position="147"/>
        <end position="167"/>
    </location>
</feature>
<feature type="transmembrane region" description="Helical" evidence="1">
    <location>
        <begin position="193"/>
        <end position="213"/>
    </location>
</feature>
<feature type="active site" evidence="1">
    <location>
        <position position="140"/>
    </location>
</feature>
<feature type="binding site" evidence="1">
    <location>
        <position position="139"/>
    </location>
    <ligand>
        <name>Zn(2+)</name>
        <dbReference type="ChEBI" id="CHEBI:29105"/>
        <note>catalytic</note>
    </ligand>
</feature>
<feature type="binding site" evidence="1">
    <location>
        <position position="143"/>
    </location>
    <ligand>
        <name>Zn(2+)</name>
        <dbReference type="ChEBI" id="CHEBI:29105"/>
        <note>catalytic</note>
    </ligand>
</feature>
<feature type="binding site" evidence="1">
    <location>
        <position position="222"/>
    </location>
    <ligand>
        <name>Zn(2+)</name>
        <dbReference type="ChEBI" id="CHEBI:29105"/>
        <note>catalytic</note>
    </ligand>
</feature>
<reference key="1">
    <citation type="journal article" date="2000" name="Nature">
        <title>Genome sequence of the endocellular bacterial symbiont of aphids Buchnera sp. APS.</title>
        <authorList>
            <person name="Shigenobu S."/>
            <person name="Watanabe H."/>
            <person name="Hattori M."/>
            <person name="Sakaki Y."/>
            <person name="Ishikawa H."/>
        </authorList>
    </citation>
    <scope>NUCLEOTIDE SEQUENCE [LARGE SCALE GENOMIC DNA]</scope>
    <source>
        <strain>APS</strain>
    </source>
</reference>
<protein>
    <recommendedName>
        <fullName evidence="1">Protease HtpX</fullName>
        <ecNumber evidence="1">3.4.24.-</ecNumber>
    </recommendedName>
    <alternativeName>
        <fullName evidence="1">Heat shock protein HtpX</fullName>
    </alternativeName>
</protein>
<keyword id="KW-1003">Cell membrane</keyword>
<keyword id="KW-0378">Hydrolase</keyword>
<keyword id="KW-0472">Membrane</keyword>
<keyword id="KW-0479">Metal-binding</keyword>
<keyword id="KW-0482">Metalloprotease</keyword>
<keyword id="KW-0645">Protease</keyword>
<keyword id="KW-1185">Reference proteome</keyword>
<keyword id="KW-0812">Transmembrane</keyword>
<keyword id="KW-1133">Transmembrane helix</keyword>
<keyword id="KW-0862">Zinc</keyword>
<gene>
    <name evidence="1" type="primary">htpX</name>
    <name type="ordered locus">BU321</name>
</gene>
<comment type="cofactor">
    <cofactor evidence="1">
        <name>Zn(2+)</name>
        <dbReference type="ChEBI" id="CHEBI:29105"/>
    </cofactor>
    <text evidence="1">Binds 1 zinc ion per subunit.</text>
</comment>
<comment type="subcellular location">
    <subcellularLocation>
        <location evidence="1">Cell membrane</location>
        <topology evidence="1">Multi-pass membrane protein</topology>
    </subcellularLocation>
</comment>
<comment type="similarity">
    <text evidence="1">Belongs to the peptidase M48B family.</text>
</comment>
<accession>P57406</accession>
<proteinExistence type="inferred from homology"/>